<accession>Q5ZRL3</accession>
<keyword id="KW-0963">Cytoplasm</keyword>
<keyword id="KW-0489">Methyltransferase</keyword>
<keyword id="KW-0545">Nucleotide biosynthesis</keyword>
<keyword id="KW-1185">Reference proteome</keyword>
<keyword id="KW-0808">Transferase</keyword>
<proteinExistence type="inferred from homology"/>
<organism>
    <name type="scientific">Legionella pneumophila subsp. pneumophila (strain Philadelphia 1 / ATCC 33152 / DSM 7513)</name>
    <dbReference type="NCBI Taxonomy" id="272624"/>
    <lineage>
        <taxon>Bacteria</taxon>
        <taxon>Pseudomonadati</taxon>
        <taxon>Pseudomonadota</taxon>
        <taxon>Gammaproteobacteria</taxon>
        <taxon>Legionellales</taxon>
        <taxon>Legionellaceae</taxon>
        <taxon>Legionella</taxon>
    </lineage>
</organism>
<dbReference type="EC" id="2.1.1.45" evidence="1"/>
<dbReference type="EMBL" id="AE017354">
    <property type="protein sequence ID" value="AAU28915.1"/>
    <property type="molecule type" value="Genomic_DNA"/>
</dbReference>
<dbReference type="RefSeq" id="WP_010948554.1">
    <property type="nucleotide sequence ID" value="NC_002942.5"/>
</dbReference>
<dbReference type="RefSeq" id="YP_096862.1">
    <property type="nucleotide sequence ID" value="NC_002942.5"/>
</dbReference>
<dbReference type="SMR" id="Q5ZRL3"/>
<dbReference type="STRING" id="272624.lpg2868"/>
<dbReference type="PaxDb" id="272624-lpg2868"/>
<dbReference type="GeneID" id="57036867"/>
<dbReference type="KEGG" id="lpn:lpg2868"/>
<dbReference type="PATRIC" id="fig|272624.6.peg.3055"/>
<dbReference type="eggNOG" id="COG0207">
    <property type="taxonomic scope" value="Bacteria"/>
</dbReference>
<dbReference type="HOGENOM" id="CLU_021669_0_0_6"/>
<dbReference type="OrthoDB" id="9774633at2"/>
<dbReference type="UniPathway" id="UPA00575"/>
<dbReference type="Proteomes" id="UP000000609">
    <property type="component" value="Chromosome"/>
</dbReference>
<dbReference type="GO" id="GO:0005829">
    <property type="term" value="C:cytosol"/>
    <property type="evidence" value="ECO:0007669"/>
    <property type="project" value="TreeGrafter"/>
</dbReference>
<dbReference type="GO" id="GO:0004799">
    <property type="term" value="F:thymidylate synthase activity"/>
    <property type="evidence" value="ECO:0007669"/>
    <property type="project" value="UniProtKB-UniRule"/>
</dbReference>
<dbReference type="GO" id="GO:0006231">
    <property type="term" value="P:dTMP biosynthetic process"/>
    <property type="evidence" value="ECO:0007669"/>
    <property type="project" value="UniProtKB-UniRule"/>
</dbReference>
<dbReference type="GO" id="GO:0006235">
    <property type="term" value="P:dTTP biosynthetic process"/>
    <property type="evidence" value="ECO:0007669"/>
    <property type="project" value="UniProtKB-UniRule"/>
</dbReference>
<dbReference type="GO" id="GO:0032259">
    <property type="term" value="P:methylation"/>
    <property type="evidence" value="ECO:0007669"/>
    <property type="project" value="UniProtKB-KW"/>
</dbReference>
<dbReference type="CDD" id="cd00351">
    <property type="entry name" value="TS_Pyrimidine_HMase"/>
    <property type="match status" value="1"/>
</dbReference>
<dbReference type="FunFam" id="3.30.572.10:FF:000001">
    <property type="entry name" value="Thymidylate synthase"/>
    <property type="match status" value="1"/>
</dbReference>
<dbReference type="Gene3D" id="3.30.572.10">
    <property type="entry name" value="Thymidylate synthase/dCMP hydroxymethylase domain"/>
    <property type="match status" value="1"/>
</dbReference>
<dbReference type="HAMAP" id="MF_00008">
    <property type="entry name" value="Thymidy_synth_bact"/>
    <property type="match status" value="1"/>
</dbReference>
<dbReference type="InterPro" id="IPR045097">
    <property type="entry name" value="Thymidate_synth/dCMP_Mease"/>
</dbReference>
<dbReference type="InterPro" id="IPR023451">
    <property type="entry name" value="Thymidate_synth/dCMP_Mease_dom"/>
</dbReference>
<dbReference type="InterPro" id="IPR036926">
    <property type="entry name" value="Thymidate_synth/dCMP_Mease_sf"/>
</dbReference>
<dbReference type="InterPro" id="IPR000398">
    <property type="entry name" value="Thymidylate_synthase"/>
</dbReference>
<dbReference type="InterPro" id="IPR020940">
    <property type="entry name" value="Thymidylate_synthase_AS"/>
</dbReference>
<dbReference type="NCBIfam" id="NF002497">
    <property type="entry name" value="PRK01827.1-3"/>
    <property type="match status" value="1"/>
</dbReference>
<dbReference type="NCBIfam" id="NF002499">
    <property type="entry name" value="PRK01827.1-5"/>
    <property type="match status" value="1"/>
</dbReference>
<dbReference type="NCBIfam" id="TIGR03284">
    <property type="entry name" value="thym_sym"/>
    <property type="match status" value="2"/>
</dbReference>
<dbReference type="PANTHER" id="PTHR11548:SF9">
    <property type="entry name" value="THYMIDYLATE SYNTHASE"/>
    <property type="match status" value="1"/>
</dbReference>
<dbReference type="PANTHER" id="PTHR11548">
    <property type="entry name" value="THYMIDYLATE SYNTHASE 1"/>
    <property type="match status" value="1"/>
</dbReference>
<dbReference type="Pfam" id="PF00303">
    <property type="entry name" value="Thymidylat_synt"/>
    <property type="match status" value="1"/>
</dbReference>
<dbReference type="PRINTS" id="PR00108">
    <property type="entry name" value="THYMDSNTHASE"/>
</dbReference>
<dbReference type="SUPFAM" id="SSF55831">
    <property type="entry name" value="Thymidylate synthase/dCMP hydroxymethylase"/>
    <property type="match status" value="1"/>
</dbReference>
<dbReference type="PROSITE" id="PS00091">
    <property type="entry name" value="THYMIDYLATE_SYNTHASE"/>
    <property type="match status" value="1"/>
</dbReference>
<comment type="function">
    <text evidence="1">Catalyzes the reductive methylation of 2'-deoxyuridine-5'-monophosphate (dUMP) to 2'-deoxythymidine-5'-monophosphate (dTMP) while utilizing 5,10-methylenetetrahydrofolate (mTHF) as the methyl donor and reductant in the reaction, yielding dihydrofolate (DHF) as a by-product. This enzymatic reaction provides an intracellular de novo source of dTMP, an essential precursor for DNA biosynthesis.</text>
</comment>
<comment type="catalytic activity">
    <reaction evidence="1">
        <text>dUMP + (6R)-5,10-methylene-5,6,7,8-tetrahydrofolate = 7,8-dihydrofolate + dTMP</text>
        <dbReference type="Rhea" id="RHEA:12104"/>
        <dbReference type="ChEBI" id="CHEBI:15636"/>
        <dbReference type="ChEBI" id="CHEBI:57451"/>
        <dbReference type="ChEBI" id="CHEBI:63528"/>
        <dbReference type="ChEBI" id="CHEBI:246422"/>
        <dbReference type="EC" id="2.1.1.45"/>
    </reaction>
</comment>
<comment type="pathway">
    <text evidence="1">Pyrimidine metabolism; dTTP biosynthesis.</text>
</comment>
<comment type="subunit">
    <text evidence="1">Homodimer.</text>
</comment>
<comment type="subcellular location">
    <subcellularLocation>
        <location evidence="1">Cytoplasm</location>
    </subcellularLocation>
</comment>
<comment type="similarity">
    <text evidence="1">Belongs to the thymidylate synthase family. Bacterial-type ThyA subfamily.</text>
</comment>
<gene>
    <name evidence="1" type="primary">thyA</name>
    <name type="ordered locus">lpg2868</name>
</gene>
<evidence type="ECO:0000255" key="1">
    <source>
        <dbReference type="HAMAP-Rule" id="MF_00008"/>
    </source>
</evidence>
<sequence length="264" mass="30165">MKTYLQLLEHILQHGVEKSDRTGTGTLSVFGYQMRFDLAQGFPLVTTKKLHTRSIVHELLWFLRGDTNISYLKENGVTIWDEWADNNGDLGPVYGKQWRSWPTADGRTIDQLSEVVQQIKSNPDSRRLIVSAWNVGELDKMALMPCHALFQFYVANNKLSCQLYQRSADVFLGVPFNIASYSLLTHMVAQQCNLDVAEFIWTGGDCHLYLNHLEQAQIQLTREPLPLPSLAIKRKPASLFDYAYEDFEFLNYQSHPAIKAPIAV</sequence>
<reference key="1">
    <citation type="journal article" date="2004" name="Science">
        <title>The genomic sequence of the accidental pathogen Legionella pneumophila.</title>
        <authorList>
            <person name="Chien M."/>
            <person name="Morozova I."/>
            <person name="Shi S."/>
            <person name="Sheng H."/>
            <person name="Chen J."/>
            <person name="Gomez S.M."/>
            <person name="Asamani G."/>
            <person name="Hill K."/>
            <person name="Nuara J."/>
            <person name="Feder M."/>
            <person name="Rineer J."/>
            <person name="Greenberg J.J."/>
            <person name="Steshenko V."/>
            <person name="Park S.H."/>
            <person name="Zhao B."/>
            <person name="Teplitskaya E."/>
            <person name="Edwards J.R."/>
            <person name="Pampou S."/>
            <person name="Georghiou A."/>
            <person name="Chou I.-C."/>
            <person name="Iannuccilli W."/>
            <person name="Ulz M.E."/>
            <person name="Kim D.H."/>
            <person name="Geringer-Sameth A."/>
            <person name="Goldsberry C."/>
            <person name="Morozov P."/>
            <person name="Fischer S.G."/>
            <person name="Segal G."/>
            <person name="Qu X."/>
            <person name="Rzhetsky A."/>
            <person name="Zhang P."/>
            <person name="Cayanis E."/>
            <person name="De Jong P.J."/>
            <person name="Ju J."/>
            <person name="Kalachikov S."/>
            <person name="Shuman H.A."/>
            <person name="Russo J.J."/>
        </authorList>
    </citation>
    <scope>NUCLEOTIDE SEQUENCE [LARGE SCALE GENOMIC DNA]</scope>
    <source>
        <strain>Philadelphia 1 / ATCC 33152 / DSM 7513</strain>
    </source>
</reference>
<name>TYSY_LEGPH</name>
<protein>
    <recommendedName>
        <fullName evidence="1">Thymidylate synthase</fullName>
        <shortName evidence="1">TS</shortName>
        <shortName evidence="1">TSase</shortName>
        <ecNumber evidence="1">2.1.1.45</ecNumber>
    </recommendedName>
</protein>
<feature type="chain" id="PRO_0000140972" description="Thymidylate synthase">
    <location>
        <begin position="1"/>
        <end position="264"/>
    </location>
</feature>
<feature type="active site" description="Nucleophile" evidence="1">
    <location>
        <position position="146"/>
    </location>
</feature>
<feature type="binding site" description="in other chain" evidence="1">
    <location>
        <position position="21"/>
    </location>
    <ligand>
        <name>dUMP</name>
        <dbReference type="ChEBI" id="CHEBI:246422"/>
        <note>ligand shared between dimeric partners</note>
    </ligand>
</feature>
<feature type="binding site" evidence="1">
    <location>
        <position position="51"/>
    </location>
    <ligand>
        <name>(6R)-5,10-methylene-5,6,7,8-tetrahydrofolate</name>
        <dbReference type="ChEBI" id="CHEBI:15636"/>
    </ligand>
</feature>
<feature type="binding site" evidence="1">
    <location>
        <begin position="126"/>
        <end position="127"/>
    </location>
    <ligand>
        <name>dUMP</name>
        <dbReference type="ChEBI" id="CHEBI:246422"/>
        <note>ligand shared between dimeric partners</note>
    </ligand>
</feature>
<feature type="binding site" description="in other chain" evidence="1">
    <location>
        <begin position="166"/>
        <end position="169"/>
    </location>
    <ligand>
        <name>dUMP</name>
        <dbReference type="ChEBI" id="CHEBI:246422"/>
        <note>ligand shared between dimeric partners</note>
    </ligand>
</feature>
<feature type="binding site" evidence="1">
    <location>
        <position position="169"/>
    </location>
    <ligand>
        <name>(6R)-5,10-methylene-5,6,7,8-tetrahydrofolate</name>
        <dbReference type="ChEBI" id="CHEBI:15636"/>
    </ligand>
</feature>
<feature type="binding site" description="in other chain" evidence="1">
    <location>
        <position position="177"/>
    </location>
    <ligand>
        <name>dUMP</name>
        <dbReference type="ChEBI" id="CHEBI:246422"/>
        <note>ligand shared between dimeric partners</note>
    </ligand>
</feature>
<feature type="binding site" description="in other chain" evidence="1">
    <location>
        <begin position="207"/>
        <end position="209"/>
    </location>
    <ligand>
        <name>dUMP</name>
        <dbReference type="ChEBI" id="CHEBI:246422"/>
        <note>ligand shared between dimeric partners</note>
    </ligand>
</feature>
<feature type="binding site" evidence="1">
    <location>
        <position position="263"/>
    </location>
    <ligand>
        <name>(6R)-5,10-methylene-5,6,7,8-tetrahydrofolate</name>
        <dbReference type="ChEBI" id="CHEBI:15636"/>
    </ligand>
</feature>